<proteinExistence type="inferred from homology"/>
<name>HIS6_XANCP</name>
<evidence type="ECO:0000255" key="1">
    <source>
        <dbReference type="HAMAP-Rule" id="MF_01013"/>
    </source>
</evidence>
<sequence>MLSRRIIPCLDVRDGRVVKGVKFRDHIDMGDIVELAMRYRDQGADELVFYDIGASPEGRSVDYAWVERVARLIDIPFCVAGGIRDVETARAVLHAGADKISINSPALGRPQLISELADAFGVQCVVVGIDSIREEDGQWRVRRYTGDPSKTQALPMRTLDWVAEAQRLGAGEIVLNCMDNDGVRHGYDIAQLRQVRALCRVPLIASGGAGEMQHFADVFDQADADGALAASVFHSGAIPIPELKRFLRAQQIEVRDGQ</sequence>
<accession>Q8P9N9</accession>
<organism>
    <name type="scientific">Xanthomonas campestris pv. campestris (strain ATCC 33913 / DSM 3586 / NCPPB 528 / LMG 568 / P 25)</name>
    <dbReference type="NCBI Taxonomy" id="190485"/>
    <lineage>
        <taxon>Bacteria</taxon>
        <taxon>Pseudomonadati</taxon>
        <taxon>Pseudomonadota</taxon>
        <taxon>Gammaproteobacteria</taxon>
        <taxon>Lysobacterales</taxon>
        <taxon>Lysobacteraceae</taxon>
        <taxon>Xanthomonas</taxon>
    </lineage>
</organism>
<keyword id="KW-0028">Amino-acid biosynthesis</keyword>
<keyword id="KW-0963">Cytoplasm</keyword>
<keyword id="KW-0368">Histidine biosynthesis</keyword>
<keyword id="KW-0456">Lyase</keyword>
<keyword id="KW-1185">Reference proteome</keyword>
<feature type="chain" id="PRO_0000142266" description="Imidazole glycerol phosphate synthase subunit HisF">
    <location>
        <begin position="1"/>
        <end position="258"/>
    </location>
</feature>
<feature type="active site" evidence="1">
    <location>
        <position position="11"/>
    </location>
</feature>
<feature type="active site" evidence="1">
    <location>
        <position position="130"/>
    </location>
</feature>
<protein>
    <recommendedName>
        <fullName evidence="1">Imidazole glycerol phosphate synthase subunit HisF</fullName>
        <ecNumber evidence="1">4.3.2.10</ecNumber>
    </recommendedName>
    <alternativeName>
        <fullName evidence="1">IGP synthase cyclase subunit</fullName>
    </alternativeName>
    <alternativeName>
        <fullName evidence="1">IGP synthase subunit HisF</fullName>
    </alternativeName>
    <alternativeName>
        <fullName evidence="1">ImGP synthase subunit HisF</fullName>
        <shortName evidence="1">IGPS subunit HisF</shortName>
    </alternativeName>
</protein>
<dbReference type="EC" id="4.3.2.10" evidence="1"/>
<dbReference type="EMBL" id="AE008922">
    <property type="protein sequence ID" value="AAM41103.1"/>
    <property type="molecule type" value="Genomic_DNA"/>
</dbReference>
<dbReference type="RefSeq" id="NP_637179.1">
    <property type="nucleotide sequence ID" value="NC_003902.1"/>
</dbReference>
<dbReference type="RefSeq" id="WP_011036984.1">
    <property type="nucleotide sequence ID" value="NC_003902.1"/>
</dbReference>
<dbReference type="SMR" id="Q8P9N9"/>
<dbReference type="STRING" id="190485.XCC1814"/>
<dbReference type="EnsemblBacteria" id="AAM41103">
    <property type="protein sequence ID" value="AAM41103"/>
    <property type="gene ID" value="XCC1814"/>
</dbReference>
<dbReference type="GeneID" id="58013638"/>
<dbReference type="KEGG" id="xcc:XCC1814"/>
<dbReference type="PATRIC" id="fig|190485.4.peg.1934"/>
<dbReference type="eggNOG" id="COG0107">
    <property type="taxonomic scope" value="Bacteria"/>
</dbReference>
<dbReference type="HOGENOM" id="CLU_048577_4_0_6"/>
<dbReference type="OrthoDB" id="9781903at2"/>
<dbReference type="UniPathway" id="UPA00031">
    <property type="reaction ID" value="UER00010"/>
</dbReference>
<dbReference type="Proteomes" id="UP000001010">
    <property type="component" value="Chromosome"/>
</dbReference>
<dbReference type="GO" id="GO:0005737">
    <property type="term" value="C:cytoplasm"/>
    <property type="evidence" value="ECO:0007669"/>
    <property type="project" value="UniProtKB-SubCell"/>
</dbReference>
<dbReference type="GO" id="GO:0000107">
    <property type="term" value="F:imidazoleglycerol-phosphate synthase activity"/>
    <property type="evidence" value="ECO:0000318"/>
    <property type="project" value="GO_Central"/>
</dbReference>
<dbReference type="GO" id="GO:0016829">
    <property type="term" value="F:lyase activity"/>
    <property type="evidence" value="ECO:0007669"/>
    <property type="project" value="UniProtKB-KW"/>
</dbReference>
<dbReference type="GO" id="GO:0000105">
    <property type="term" value="P:L-histidine biosynthetic process"/>
    <property type="evidence" value="ECO:0007669"/>
    <property type="project" value="UniProtKB-UniRule"/>
</dbReference>
<dbReference type="CDD" id="cd04731">
    <property type="entry name" value="HisF"/>
    <property type="match status" value="1"/>
</dbReference>
<dbReference type="FunFam" id="3.20.20.70:FF:000006">
    <property type="entry name" value="Imidazole glycerol phosphate synthase subunit HisF"/>
    <property type="match status" value="1"/>
</dbReference>
<dbReference type="Gene3D" id="3.20.20.70">
    <property type="entry name" value="Aldolase class I"/>
    <property type="match status" value="1"/>
</dbReference>
<dbReference type="HAMAP" id="MF_01013">
    <property type="entry name" value="HisF"/>
    <property type="match status" value="1"/>
</dbReference>
<dbReference type="InterPro" id="IPR013785">
    <property type="entry name" value="Aldolase_TIM"/>
</dbReference>
<dbReference type="InterPro" id="IPR006062">
    <property type="entry name" value="His_biosynth"/>
</dbReference>
<dbReference type="InterPro" id="IPR004651">
    <property type="entry name" value="HisF"/>
</dbReference>
<dbReference type="InterPro" id="IPR050064">
    <property type="entry name" value="IGPS_HisA/HisF"/>
</dbReference>
<dbReference type="InterPro" id="IPR011060">
    <property type="entry name" value="RibuloseP-bd_barrel"/>
</dbReference>
<dbReference type="NCBIfam" id="TIGR00735">
    <property type="entry name" value="hisF"/>
    <property type="match status" value="1"/>
</dbReference>
<dbReference type="PANTHER" id="PTHR21235:SF2">
    <property type="entry name" value="IMIDAZOLE GLYCEROL PHOSPHATE SYNTHASE HISHF"/>
    <property type="match status" value="1"/>
</dbReference>
<dbReference type="PANTHER" id="PTHR21235">
    <property type="entry name" value="IMIDAZOLE GLYCEROL PHOSPHATE SYNTHASE SUBUNIT HISF/H IGP SYNTHASE SUBUNIT HISF/H"/>
    <property type="match status" value="1"/>
</dbReference>
<dbReference type="Pfam" id="PF00977">
    <property type="entry name" value="His_biosynth"/>
    <property type="match status" value="1"/>
</dbReference>
<dbReference type="SUPFAM" id="SSF51366">
    <property type="entry name" value="Ribulose-phoshate binding barrel"/>
    <property type="match status" value="1"/>
</dbReference>
<gene>
    <name evidence="1" type="primary">hisF</name>
    <name type="ordered locus">XCC1814</name>
</gene>
<comment type="function">
    <text evidence="1">IGPS catalyzes the conversion of PRFAR and glutamine to IGP, AICAR and glutamate. The HisF subunit catalyzes the cyclization activity that produces IGP and AICAR from PRFAR using the ammonia provided by the HisH subunit.</text>
</comment>
<comment type="catalytic activity">
    <reaction evidence="1">
        <text>5-[(5-phospho-1-deoxy-D-ribulos-1-ylimino)methylamino]-1-(5-phospho-beta-D-ribosyl)imidazole-4-carboxamide + L-glutamine = D-erythro-1-(imidazol-4-yl)glycerol 3-phosphate + 5-amino-1-(5-phospho-beta-D-ribosyl)imidazole-4-carboxamide + L-glutamate + H(+)</text>
        <dbReference type="Rhea" id="RHEA:24793"/>
        <dbReference type="ChEBI" id="CHEBI:15378"/>
        <dbReference type="ChEBI" id="CHEBI:29985"/>
        <dbReference type="ChEBI" id="CHEBI:58278"/>
        <dbReference type="ChEBI" id="CHEBI:58359"/>
        <dbReference type="ChEBI" id="CHEBI:58475"/>
        <dbReference type="ChEBI" id="CHEBI:58525"/>
        <dbReference type="EC" id="4.3.2.10"/>
    </reaction>
</comment>
<comment type="pathway">
    <text evidence="1">Amino-acid biosynthesis; L-histidine biosynthesis; L-histidine from 5-phospho-alpha-D-ribose 1-diphosphate: step 5/9.</text>
</comment>
<comment type="subunit">
    <text evidence="1">Heterodimer of HisH and HisF.</text>
</comment>
<comment type="subcellular location">
    <subcellularLocation>
        <location evidence="1">Cytoplasm</location>
    </subcellularLocation>
</comment>
<comment type="similarity">
    <text evidence="1">Belongs to the HisA/HisF family.</text>
</comment>
<reference key="1">
    <citation type="journal article" date="2002" name="Nature">
        <title>Comparison of the genomes of two Xanthomonas pathogens with differing host specificities.</title>
        <authorList>
            <person name="da Silva A.C.R."/>
            <person name="Ferro J.A."/>
            <person name="Reinach F.C."/>
            <person name="Farah C.S."/>
            <person name="Furlan L.R."/>
            <person name="Quaggio R.B."/>
            <person name="Monteiro-Vitorello C.B."/>
            <person name="Van Sluys M.A."/>
            <person name="Almeida N.F. Jr."/>
            <person name="Alves L.M.C."/>
            <person name="do Amaral A.M."/>
            <person name="Bertolini M.C."/>
            <person name="Camargo L.E.A."/>
            <person name="Camarotte G."/>
            <person name="Cannavan F."/>
            <person name="Cardozo J."/>
            <person name="Chambergo F."/>
            <person name="Ciapina L.P."/>
            <person name="Cicarelli R.M.B."/>
            <person name="Coutinho L.L."/>
            <person name="Cursino-Santos J.R."/>
            <person name="El-Dorry H."/>
            <person name="Faria J.B."/>
            <person name="Ferreira A.J.S."/>
            <person name="Ferreira R.C.C."/>
            <person name="Ferro M.I.T."/>
            <person name="Formighieri E.F."/>
            <person name="Franco M.C."/>
            <person name="Greggio C.C."/>
            <person name="Gruber A."/>
            <person name="Katsuyama A.M."/>
            <person name="Kishi L.T."/>
            <person name="Leite R.P."/>
            <person name="Lemos E.G.M."/>
            <person name="Lemos M.V.F."/>
            <person name="Locali E.C."/>
            <person name="Machado M.A."/>
            <person name="Madeira A.M.B.N."/>
            <person name="Martinez-Rossi N.M."/>
            <person name="Martins E.C."/>
            <person name="Meidanis J."/>
            <person name="Menck C.F.M."/>
            <person name="Miyaki C.Y."/>
            <person name="Moon D.H."/>
            <person name="Moreira L.M."/>
            <person name="Novo M.T.M."/>
            <person name="Okura V.K."/>
            <person name="Oliveira M.C."/>
            <person name="Oliveira V.R."/>
            <person name="Pereira H.A."/>
            <person name="Rossi A."/>
            <person name="Sena J.A.D."/>
            <person name="Silva C."/>
            <person name="de Souza R.F."/>
            <person name="Spinola L.A.F."/>
            <person name="Takita M.A."/>
            <person name="Tamura R.E."/>
            <person name="Teixeira E.C."/>
            <person name="Tezza R.I.D."/>
            <person name="Trindade dos Santos M."/>
            <person name="Truffi D."/>
            <person name="Tsai S.M."/>
            <person name="White F.F."/>
            <person name="Setubal J.C."/>
            <person name="Kitajima J.P."/>
        </authorList>
    </citation>
    <scope>NUCLEOTIDE SEQUENCE [LARGE SCALE GENOMIC DNA]</scope>
    <source>
        <strain>ATCC 33913 / DSM 3586 / NCPPB 528 / LMG 568 / P 25</strain>
    </source>
</reference>